<organism>
    <name type="scientific">Helicobacter pylori (strain J99 / ATCC 700824)</name>
    <name type="common">Campylobacter pylori J99</name>
    <dbReference type="NCBI Taxonomy" id="85963"/>
    <lineage>
        <taxon>Bacteria</taxon>
        <taxon>Pseudomonadati</taxon>
        <taxon>Campylobacterota</taxon>
        <taxon>Epsilonproteobacteria</taxon>
        <taxon>Campylobacterales</taxon>
        <taxon>Helicobacteraceae</taxon>
        <taxon>Helicobacter</taxon>
    </lineage>
</organism>
<feature type="chain" id="PRO_0000146781" description="Acetyl-coenzyme A carboxylase carboxyl transferase subunit alpha">
    <location>
        <begin position="1"/>
        <end position="312"/>
    </location>
</feature>
<feature type="domain" description="CoA carboxyltransferase C-terminal" evidence="2">
    <location>
        <begin position="36"/>
        <end position="286"/>
    </location>
</feature>
<name>ACCA_HELPJ</name>
<proteinExistence type="inferred from homology"/>
<evidence type="ECO:0000255" key="1">
    <source>
        <dbReference type="HAMAP-Rule" id="MF_00823"/>
    </source>
</evidence>
<evidence type="ECO:0000255" key="2">
    <source>
        <dbReference type="PROSITE-ProRule" id="PRU01137"/>
    </source>
</evidence>
<reference key="1">
    <citation type="journal article" date="1999" name="Nature">
        <title>Genomic sequence comparison of two unrelated isolates of the human gastric pathogen Helicobacter pylori.</title>
        <authorList>
            <person name="Alm R.A."/>
            <person name="Ling L.-S.L."/>
            <person name="Moir D.T."/>
            <person name="King B.L."/>
            <person name="Brown E.D."/>
            <person name="Doig P.C."/>
            <person name="Smith D.R."/>
            <person name="Noonan B."/>
            <person name="Guild B.C."/>
            <person name="deJonge B.L."/>
            <person name="Carmel G."/>
            <person name="Tummino P.J."/>
            <person name="Caruso A."/>
            <person name="Uria-Nickelsen M."/>
            <person name="Mills D.M."/>
            <person name="Ives C."/>
            <person name="Gibson R."/>
            <person name="Merberg D."/>
            <person name="Mills S.D."/>
            <person name="Jiang Q."/>
            <person name="Taylor D.E."/>
            <person name="Vovis G.F."/>
            <person name="Trust T.J."/>
        </authorList>
    </citation>
    <scope>NUCLEOTIDE SEQUENCE [LARGE SCALE GENOMIC DNA]</scope>
    <source>
        <strain>J99 / ATCC 700824</strain>
    </source>
</reference>
<comment type="function">
    <text evidence="1">Component of the acetyl coenzyme A carboxylase (ACC) complex. First, biotin carboxylase catalyzes the carboxylation of biotin on its carrier protein (BCCP) and then the CO(2) group is transferred by the carboxyltransferase to acetyl-CoA to form malonyl-CoA.</text>
</comment>
<comment type="catalytic activity">
    <reaction evidence="1">
        <text>N(6)-carboxybiotinyl-L-lysyl-[protein] + acetyl-CoA = N(6)-biotinyl-L-lysyl-[protein] + malonyl-CoA</text>
        <dbReference type="Rhea" id="RHEA:54728"/>
        <dbReference type="Rhea" id="RHEA-COMP:10505"/>
        <dbReference type="Rhea" id="RHEA-COMP:10506"/>
        <dbReference type="ChEBI" id="CHEBI:57288"/>
        <dbReference type="ChEBI" id="CHEBI:57384"/>
        <dbReference type="ChEBI" id="CHEBI:83144"/>
        <dbReference type="ChEBI" id="CHEBI:83145"/>
        <dbReference type="EC" id="2.1.3.15"/>
    </reaction>
</comment>
<comment type="pathway">
    <text evidence="1">Lipid metabolism; malonyl-CoA biosynthesis; malonyl-CoA from acetyl-CoA: step 1/1.</text>
</comment>
<comment type="subunit">
    <text evidence="1">Acetyl-CoA carboxylase is a heterohexamer composed of biotin carboxyl carrier protein (AccB), biotin carboxylase (AccC) and two subunits each of ACCase subunit alpha (AccA) and ACCase subunit beta (AccD).</text>
</comment>
<comment type="subcellular location">
    <subcellularLocation>
        <location evidence="1">Cytoplasm</location>
    </subcellularLocation>
</comment>
<comment type="similarity">
    <text evidence="1">Belongs to the AccA family.</text>
</comment>
<accession>Q9ZLS3</accession>
<keyword id="KW-0067">ATP-binding</keyword>
<keyword id="KW-0963">Cytoplasm</keyword>
<keyword id="KW-0275">Fatty acid biosynthesis</keyword>
<keyword id="KW-0276">Fatty acid metabolism</keyword>
<keyword id="KW-0444">Lipid biosynthesis</keyword>
<keyword id="KW-0443">Lipid metabolism</keyword>
<keyword id="KW-0547">Nucleotide-binding</keyword>
<keyword id="KW-0808">Transferase</keyword>
<protein>
    <recommendedName>
        <fullName evidence="1">Acetyl-coenzyme A carboxylase carboxyl transferase subunit alpha</fullName>
        <shortName evidence="1">ACCase subunit alpha</shortName>
        <shortName evidence="1">Acetyl-CoA carboxylase carboxyltransferase subunit alpha</shortName>
        <ecNumber evidence="1">2.1.3.15</ecNumber>
    </recommendedName>
</protein>
<dbReference type="EC" id="2.1.3.15" evidence="1"/>
<dbReference type="EMBL" id="AE001439">
    <property type="protein sequence ID" value="AAD06093.1"/>
    <property type="molecule type" value="Genomic_DNA"/>
</dbReference>
<dbReference type="PIR" id="F71922">
    <property type="entry name" value="F71922"/>
</dbReference>
<dbReference type="RefSeq" id="WP_001029379.1">
    <property type="nucleotide sequence ID" value="NZ_CP011330.1"/>
</dbReference>
<dbReference type="SMR" id="Q9ZLS3"/>
<dbReference type="KEGG" id="hpj:jhp_0504"/>
<dbReference type="PATRIC" id="fig|85963.30.peg.491"/>
<dbReference type="eggNOG" id="COG0825">
    <property type="taxonomic scope" value="Bacteria"/>
</dbReference>
<dbReference type="UniPathway" id="UPA00655">
    <property type="reaction ID" value="UER00711"/>
</dbReference>
<dbReference type="Proteomes" id="UP000000804">
    <property type="component" value="Chromosome"/>
</dbReference>
<dbReference type="GO" id="GO:0009317">
    <property type="term" value="C:acetyl-CoA carboxylase complex"/>
    <property type="evidence" value="ECO:0007669"/>
    <property type="project" value="InterPro"/>
</dbReference>
<dbReference type="GO" id="GO:0003989">
    <property type="term" value="F:acetyl-CoA carboxylase activity"/>
    <property type="evidence" value="ECO:0007669"/>
    <property type="project" value="InterPro"/>
</dbReference>
<dbReference type="GO" id="GO:0005524">
    <property type="term" value="F:ATP binding"/>
    <property type="evidence" value="ECO:0007669"/>
    <property type="project" value="UniProtKB-KW"/>
</dbReference>
<dbReference type="GO" id="GO:0016743">
    <property type="term" value="F:carboxyl- or carbamoyltransferase activity"/>
    <property type="evidence" value="ECO:0007669"/>
    <property type="project" value="UniProtKB-UniRule"/>
</dbReference>
<dbReference type="GO" id="GO:0006633">
    <property type="term" value="P:fatty acid biosynthetic process"/>
    <property type="evidence" value="ECO:0007669"/>
    <property type="project" value="UniProtKB-KW"/>
</dbReference>
<dbReference type="GO" id="GO:2001295">
    <property type="term" value="P:malonyl-CoA biosynthetic process"/>
    <property type="evidence" value="ECO:0007669"/>
    <property type="project" value="UniProtKB-UniRule"/>
</dbReference>
<dbReference type="Gene3D" id="3.90.226.10">
    <property type="entry name" value="2-enoyl-CoA Hydratase, Chain A, domain 1"/>
    <property type="match status" value="1"/>
</dbReference>
<dbReference type="HAMAP" id="MF_00823">
    <property type="entry name" value="AcetylCoA_CT_alpha"/>
    <property type="match status" value="1"/>
</dbReference>
<dbReference type="InterPro" id="IPR001095">
    <property type="entry name" value="Acetyl_CoA_COase_a_su"/>
</dbReference>
<dbReference type="InterPro" id="IPR029045">
    <property type="entry name" value="ClpP/crotonase-like_dom_sf"/>
</dbReference>
<dbReference type="InterPro" id="IPR011763">
    <property type="entry name" value="COA_CT_C"/>
</dbReference>
<dbReference type="NCBIfam" id="TIGR00513">
    <property type="entry name" value="accA"/>
    <property type="match status" value="1"/>
</dbReference>
<dbReference type="NCBIfam" id="NF041504">
    <property type="entry name" value="AccA_sub"/>
    <property type="match status" value="1"/>
</dbReference>
<dbReference type="NCBIfam" id="NF004344">
    <property type="entry name" value="PRK05724.1"/>
    <property type="match status" value="1"/>
</dbReference>
<dbReference type="PANTHER" id="PTHR42853">
    <property type="entry name" value="ACETYL-COENZYME A CARBOXYLASE CARBOXYL TRANSFERASE SUBUNIT ALPHA"/>
    <property type="match status" value="1"/>
</dbReference>
<dbReference type="PANTHER" id="PTHR42853:SF3">
    <property type="entry name" value="ACETYL-COENZYME A CARBOXYLASE CARBOXYL TRANSFERASE SUBUNIT ALPHA, CHLOROPLASTIC"/>
    <property type="match status" value="1"/>
</dbReference>
<dbReference type="Pfam" id="PF03255">
    <property type="entry name" value="ACCA"/>
    <property type="match status" value="1"/>
</dbReference>
<dbReference type="PRINTS" id="PR01069">
    <property type="entry name" value="ACCCTRFRASEA"/>
</dbReference>
<dbReference type="SUPFAM" id="SSF52096">
    <property type="entry name" value="ClpP/crotonase"/>
    <property type="match status" value="1"/>
</dbReference>
<dbReference type="PROSITE" id="PS50989">
    <property type="entry name" value="COA_CT_CTER"/>
    <property type="match status" value="1"/>
</dbReference>
<gene>
    <name evidence="1" type="primary">accA</name>
    <name type="ordered locus">jhp_0504</name>
</gene>
<sequence>MAIYLDFENHIKEIQNEIELALIRGDEDAKEILEKRLDKEVKSIYSNLTDFQKLQLARHPDRPYAMDYIDLILKDKYEVFGDRHYNDDKAIVCFIGKIDNVPVVVIGEEKGRGTKNKLLRNFGMPNPCGYRKALKMAKFAEKFNLPILMLVDTAGAYPGIGAEERGQSEAIAKNLQEFASLKVPTISIIIGEGGSGGALAIAVADKLAMMEYSIFSVISPEGCAAILWDDPSKTEVAIKAMKITPRDLKEAGLIDDIILEPSKGAHRDKFSAANTIKEYFLDALRTIQQDPHFLDNRYQKLMSLGSFVESMN</sequence>